<accession>B7NM00</accession>
<keyword id="KW-0998">Cell outer membrane</keyword>
<keyword id="KW-0449">Lipoprotein</keyword>
<keyword id="KW-0472">Membrane</keyword>
<keyword id="KW-0564">Palmitate</keyword>
<keyword id="KW-0732">Signal</keyword>
<evidence type="ECO:0000255" key="1">
    <source>
        <dbReference type="HAMAP-Rule" id="MF_01186"/>
    </source>
</evidence>
<evidence type="ECO:0000256" key="2">
    <source>
        <dbReference type="SAM" id="MobiDB-lite"/>
    </source>
</evidence>
<comment type="function">
    <text evidence="1">Together with LptD, is involved in the assembly of lipopolysaccharide (LPS) at the surface of the outer membrane. Required for the proper assembly of LptD. Binds LPS and may serve as the LPS recognition site at the outer membrane.</text>
</comment>
<comment type="subunit">
    <text evidence="1">Component of the lipopolysaccharide transport and assembly complex. Interacts with LptD.</text>
</comment>
<comment type="subcellular location">
    <subcellularLocation>
        <location evidence="1">Cell outer membrane</location>
        <topology evidence="1">Lipid-anchor</topology>
    </subcellularLocation>
</comment>
<comment type="similarity">
    <text evidence="1">Belongs to the LptE lipoprotein family.</text>
</comment>
<proteinExistence type="inferred from homology"/>
<protein>
    <recommendedName>
        <fullName evidence="1">LPS-assembly lipoprotein LptE</fullName>
    </recommendedName>
</protein>
<gene>
    <name evidence="1" type="primary">lptE</name>
    <name type="synonym">rlpB</name>
    <name type="ordered locus">ECIAI39_0616</name>
</gene>
<name>LPTE_ECO7I</name>
<organism>
    <name type="scientific">Escherichia coli O7:K1 (strain IAI39 / ExPEC)</name>
    <dbReference type="NCBI Taxonomy" id="585057"/>
    <lineage>
        <taxon>Bacteria</taxon>
        <taxon>Pseudomonadati</taxon>
        <taxon>Pseudomonadota</taxon>
        <taxon>Gammaproteobacteria</taxon>
        <taxon>Enterobacterales</taxon>
        <taxon>Enterobacteriaceae</taxon>
        <taxon>Escherichia</taxon>
    </lineage>
</organism>
<sequence>MRYLATLLLSLAVLITAGCGWHLRDTTQVPSTMKVMILDSGDPNGPLSRAVRNQLRLNGVELLDKETTRKDVPSLRLGAVSISQDTASVFRNGQTAEYQMVMTVSASVLIPGRDIYPISAKVFRSFFDNPQMALAKDNEQEMIIKEMYDRAAEQLIRKLPSIRAADIRSDEEQTSTTTDTPATPARVSTTLGN</sequence>
<feature type="signal peptide" evidence="1">
    <location>
        <begin position="1"/>
        <end position="18"/>
    </location>
</feature>
<feature type="chain" id="PRO_1000138268" description="LPS-assembly lipoprotein LptE">
    <location>
        <begin position="19"/>
        <end position="193"/>
    </location>
</feature>
<feature type="region of interest" description="Disordered" evidence="2">
    <location>
        <begin position="166"/>
        <end position="193"/>
    </location>
</feature>
<feature type="compositionally biased region" description="Low complexity" evidence="2">
    <location>
        <begin position="174"/>
        <end position="186"/>
    </location>
</feature>
<feature type="lipid moiety-binding region" description="N-palmitoyl cysteine" evidence="1">
    <location>
        <position position="19"/>
    </location>
</feature>
<feature type="lipid moiety-binding region" description="S-diacylglycerol cysteine" evidence="1">
    <location>
        <position position="19"/>
    </location>
</feature>
<reference key="1">
    <citation type="journal article" date="2009" name="PLoS Genet.">
        <title>Organised genome dynamics in the Escherichia coli species results in highly diverse adaptive paths.</title>
        <authorList>
            <person name="Touchon M."/>
            <person name="Hoede C."/>
            <person name="Tenaillon O."/>
            <person name="Barbe V."/>
            <person name="Baeriswyl S."/>
            <person name="Bidet P."/>
            <person name="Bingen E."/>
            <person name="Bonacorsi S."/>
            <person name="Bouchier C."/>
            <person name="Bouvet O."/>
            <person name="Calteau A."/>
            <person name="Chiapello H."/>
            <person name="Clermont O."/>
            <person name="Cruveiller S."/>
            <person name="Danchin A."/>
            <person name="Diard M."/>
            <person name="Dossat C."/>
            <person name="Karoui M.E."/>
            <person name="Frapy E."/>
            <person name="Garry L."/>
            <person name="Ghigo J.M."/>
            <person name="Gilles A.M."/>
            <person name="Johnson J."/>
            <person name="Le Bouguenec C."/>
            <person name="Lescat M."/>
            <person name="Mangenot S."/>
            <person name="Martinez-Jehanne V."/>
            <person name="Matic I."/>
            <person name="Nassif X."/>
            <person name="Oztas S."/>
            <person name="Petit M.A."/>
            <person name="Pichon C."/>
            <person name="Rouy Z."/>
            <person name="Ruf C.S."/>
            <person name="Schneider D."/>
            <person name="Tourret J."/>
            <person name="Vacherie B."/>
            <person name="Vallenet D."/>
            <person name="Medigue C."/>
            <person name="Rocha E.P.C."/>
            <person name="Denamur E."/>
        </authorList>
    </citation>
    <scope>NUCLEOTIDE SEQUENCE [LARGE SCALE GENOMIC DNA]</scope>
    <source>
        <strain>IAI39 / ExPEC</strain>
    </source>
</reference>
<dbReference type="EMBL" id="CU928164">
    <property type="protein sequence ID" value="CAR16753.1"/>
    <property type="molecule type" value="Genomic_DNA"/>
</dbReference>
<dbReference type="RefSeq" id="WP_001269665.1">
    <property type="nucleotide sequence ID" value="NC_011750.1"/>
</dbReference>
<dbReference type="RefSeq" id="YP_002406642.1">
    <property type="nucleotide sequence ID" value="NC_011750.1"/>
</dbReference>
<dbReference type="SMR" id="B7NM00"/>
<dbReference type="STRING" id="585057.ECIAI39_0616"/>
<dbReference type="KEGG" id="ect:ECIAI39_0616"/>
<dbReference type="PATRIC" id="fig|585057.6.peg.655"/>
<dbReference type="HOGENOM" id="CLU_103309_1_1_6"/>
<dbReference type="Proteomes" id="UP000000749">
    <property type="component" value="Chromosome"/>
</dbReference>
<dbReference type="GO" id="GO:0009279">
    <property type="term" value="C:cell outer membrane"/>
    <property type="evidence" value="ECO:0007669"/>
    <property type="project" value="UniProtKB-SubCell"/>
</dbReference>
<dbReference type="GO" id="GO:1990351">
    <property type="term" value="C:transporter complex"/>
    <property type="evidence" value="ECO:0007669"/>
    <property type="project" value="TreeGrafter"/>
</dbReference>
<dbReference type="GO" id="GO:0001530">
    <property type="term" value="F:lipopolysaccharide binding"/>
    <property type="evidence" value="ECO:0007669"/>
    <property type="project" value="TreeGrafter"/>
</dbReference>
<dbReference type="GO" id="GO:0043165">
    <property type="term" value="P:Gram-negative-bacterium-type cell outer membrane assembly"/>
    <property type="evidence" value="ECO:0007669"/>
    <property type="project" value="UniProtKB-UniRule"/>
</dbReference>
<dbReference type="GO" id="GO:0015920">
    <property type="term" value="P:lipopolysaccharide transport"/>
    <property type="evidence" value="ECO:0007669"/>
    <property type="project" value="TreeGrafter"/>
</dbReference>
<dbReference type="FunFam" id="3.30.160.150:FF:000001">
    <property type="entry name" value="LPS-assembly lipoprotein LptE"/>
    <property type="match status" value="1"/>
</dbReference>
<dbReference type="Gene3D" id="3.30.160.150">
    <property type="entry name" value="Lipoprotein like domain"/>
    <property type="match status" value="1"/>
</dbReference>
<dbReference type="HAMAP" id="MF_01186">
    <property type="entry name" value="LPS_assembly_LptE"/>
    <property type="match status" value="1"/>
</dbReference>
<dbReference type="InterPro" id="IPR007485">
    <property type="entry name" value="LPS_assembly_LptE"/>
</dbReference>
<dbReference type="NCBIfam" id="NF008062">
    <property type="entry name" value="PRK10796.1"/>
    <property type="match status" value="1"/>
</dbReference>
<dbReference type="PANTHER" id="PTHR38098">
    <property type="entry name" value="LPS-ASSEMBLY LIPOPROTEIN LPTE"/>
    <property type="match status" value="1"/>
</dbReference>
<dbReference type="PANTHER" id="PTHR38098:SF1">
    <property type="entry name" value="LPS-ASSEMBLY LIPOPROTEIN LPTE"/>
    <property type="match status" value="1"/>
</dbReference>
<dbReference type="Pfam" id="PF04390">
    <property type="entry name" value="LptE"/>
    <property type="match status" value="1"/>
</dbReference>
<dbReference type="PROSITE" id="PS51257">
    <property type="entry name" value="PROKAR_LIPOPROTEIN"/>
    <property type="match status" value="1"/>
</dbReference>